<dbReference type="EC" id="3.1.26.3" evidence="1"/>
<dbReference type="EMBL" id="CP001074">
    <property type="protein sequence ID" value="ACE90437.1"/>
    <property type="molecule type" value="Genomic_DNA"/>
</dbReference>
<dbReference type="SMR" id="B3PUN8"/>
<dbReference type="KEGG" id="rec:RHECIAT_CH0001458"/>
<dbReference type="eggNOG" id="COG0571">
    <property type="taxonomic scope" value="Bacteria"/>
</dbReference>
<dbReference type="HOGENOM" id="CLU_000907_1_1_5"/>
<dbReference type="Proteomes" id="UP000008817">
    <property type="component" value="Chromosome"/>
</dbReference>
<dbReference type="GO" id="GO:0005737">
    <property type="term" value="C:cytoplasm"/>
    <property type="evidence" value="ECO:0007669"/>
    <property type="project" value="UniProtKB-SubCell"/>
</dbReference>
<dbReference type="GO" id="GO:0003725">
    <property type="term" value="F:double-stranded RNA binding"/>
    <property type="evidence" value="ECO:0007669"/>
    <property type="project" value="TreeGrafter"/>
</dbReference>
<dbReference type="GO" id="GO:0046872">
    <property type="term" value="F:metal ion binding"/>
    <property type="evidence" value="ECO:0007669"/>
    <property type="project" value="UniProtKB-KW"/>
</dbReference>
<dbReference type="GO" id="GO:0004525">
    <property type="term" value="F:ribonuclease III activity"/>
    <property type="evidence" value="ECO:0007669"/>
    <property type="project" value="UniProtKB-UniRule"/>
</dbReference>
<dbReference type="GO" id="GO:0019843">
    <property type="term" value="F:rRNA binding"/>
    <property type="evidence" value="ECO:0007669"/>
    <property type="project" value="UniProtKB-KW"/>
</dbReference>
<dbReference type="GO" id="GO:0006397">
    <property type="term" value="P:mRNA processing"/>
    <property type="evidence" value="ECO:0007669"/>
    <property type="project" value="UniProtKB-UniRule"/>
</dbReference>
<dbReference type="GO" id="GO:0010468">
    <property type="term" value="P:regulation of gene expression"/>
    <property type="evidence" value="ECO:0007669"/>
    <property type="project" value="TreeGrafter"/>
</dbReference>
<dbReference type="GO" id="GO:0006364">
    <property type="term" value="P:rRNA processing"/>
    <property type="evidence" value="ECO:0007669"/>
    <property type="project" value="UniProtKB-UniRule"/>
</dbReference>
<dbReference type="GO" id="GO:0008033">
    <property type="term" value="P:tRNA processing"/>
    <property type="evidence" value="ECO:0007669"/>
    <property type="project" value="UniProtKB-KW"/>
</dbReference>
<dbReference type="CDD" id="cd10845">
    <property type="entry name" value="DSRM_RNAse_III_family"/>
    <property type="match status" value="1"/>
</dbReference>
<dbReference type="CDD" id="cd00593">
    <property type="entry name" value="RIBOc"/>
    <property type="match status" value="1"/>
</dbReference>
<dbReference type="Gene3D" id="3.30.160.20">
    <property type="match status" value="1"/>
</dbReference>
<dbReference type="Gene3D" id="1.10.1520.10">
    <property type="entry name" value="Ribonuclease III domain"/>
    <property type="match status" value="1"/>
</dbReference>
<dbReference type="HAMAP" id="MF_00104">
    <property type="entry name" value="RNase_III"/>
    <property type="match status" value="1"/>
</dbReference>
<dbReference type="InterPro" id="IPR014720">
    <property type="entry name" value="dsRBD_dom"/>
</dbReference>
<dbReference type="InterPro" id="IPR011907">
    <property type="entry name" value="RNase_III"/>
</dbReference>
<dbReference type="InterPro" id="IPR000999">
    <property type="entry name" value="RNase_III_dom"/>
</dbReference>
<dbReference type="InterPro" id="IPR036389">
    <property type="entry name" value="RNase_III_sf"/>
</dbReference>
<dbReference type="NCBIfam" id="TIGR02191">
    <property type="entry name" value="RNaseIII"/>
    <property type="match status" value="1"/>
</dbReference>
<dbReference type="PANTHER" id="PTHR11207:SF0">
    <property type="entry name" value="RIBONUCLEASE 3"/>
    <property type="match status" value="1"/>
</dbReference>
<dbReference type="PANTHER" id="PTHR11207">
    <property type="entry name" value="RIBONUCLEASE III"/>
    <property type="match status" value="1"/>
</dbReference>
<dbReference type="Pfam" id="PF00035">
    <property type="entry name" value="dsrm"/>
    <property type="match status" value="1"/>
</dbReference>
<dbReference type="Pfam" id="PF14622">
    <property type="entry name" value="Ribonucleas_3_3"/>
    <property type="match status" value="1"/>
</dbReference>
<dbReference type="SMART" id="SM00358">
    <property type="entry name" value="DSRM"/>
    <property type="match status" value="1"/>
</dbReference>
<dbReference type="SMART" id="SM00535">
    <property type="entry name" value="RIBOc"/>
    <property type="match status" value="1"/>
</dbReference>
<dbReference type="SUPFAM" id="SSF54768">
    <property type="entry name" value="dsRNA-binding domain-like"/>
    <property type="match status" value="1"/>
</dbReference>
<dbReference type="SUPFAM" id="SSF69065">
    <property type="entry name" value="RNase III domain-like"/>
    <property type="match status" value="1"/>
</dbReference>
<dbReference type="PROSITE" id="PS50137">
    <property type="entry name" value="DS_RBD"/>
    <property type="match status" value="1"/>
</dbReference>
<dbReference type="PROSITE" id="PS00517">
    <property type="entry name" value="RNASE_3_1"/>
    <property type="match status" value="1"/>
</dbReference>
<dbReference type="PROSITE" id="PS50142">
    <property type="entry name" value="RNASE_3_2"/>
    <property type="match status" value="1"/>
</dbReference>
<accession>B3PUN8</accession>
<gene>
    <name evidence="1" type="primary">rnc</name>
    <name type="ordered locus">RHECIAT_CH0001458</name>
</gene>
<proteinExistence type="inferred from homology"/>
<sequence length="239" mass="26511">MSKAQTLSAADRAKLESLIGHDFAEKERLDRALTHASARTEKGSNYERLEFLGDRVLGLCIAELLFRTFGTAGEGELSVRLNQLVSAETCAAVADELNLHLYIRTGADVKKLTGKRMMNVRADVVESLIAAIYLDGGLEVARRFILRYWQGRAVRADGAKRDAKTELQEWSHAKFGVTPLYRVDERSGPDHDPRFKVTVEVAGIKPETGVERSKRAAEQVAATKMLEREGIWQQSPAGN</sequence>
<comment type="function">
    <text evidence="1">Digests double-stranded RNA. Involved in the processing of primary rRNA transcript to yield the immediate precursors to the large and small rRNAs (23S and 16S). Processes some mRNAs, and tRNAs when they are encoded in the rRNA operon. Processes pre-crRNA and tracrRNA of type II CRISPR loci if present in the organism.</text>
</comment>
<comment type="catalytic activity">
    <reaction evidence="1">
        <text>Endonucleolytic cleavage to 5'-phosphomonoester.</text>
        <dbReference type="EC" id="3.1.26.3"/>
    </reaction>
</comment>
<comment type="cofactor">
    <cofactor evidence="1">
        <name>Mg(2+)</name>
        <dbReference type="ChEBI" id="CHEBI:18420"/>
    </cofactor>
</comment>
<comment type="subunit">
    <text evidence="1">Homodimer.</text>
</comment>
<comment type="subcellular location">
    <subcellularLocation>
        <location evidence="1">Cytoplasm</location>
    </subcellularLocation>
</comment>
<comment type="similarity">
    <text evidence="1">Belongs to the ribonuclease III family.</text>
</comment>
<evidence type="ECO:0000255" key="1">
    <source>
        <dbReference type="HAMAP-Rule" id="MF_00104"/>
    </source>
</evidence>
<feature type="chain" id="PRO_1000094127" description="Ribonuclease 3">
    <location>
        <begin position="1"/>
        <end position="239"/>
    </location>
</feature>
<feature type="domain" description="RNase III" evidence="1">
    <location>
        <begin position="12"/>
        <end position="137"/>
    </location>
</feature>
<feature type="domain" description="DRBM" evidence="1">
    <location>
        <begin position="162"/>
        <end position="231"/>
    </location>
</feature>
<feature type="active site" evidence="1">
    <location>
        <position position="54"/>
    </location>
</feature>
<feature type="active site" evidence="1">
    <location>
        <position position="126"/>
    </location>
</feature>
<feature type="binding site" evidence="1">
    <location>
        <position position="50"/>
    </location>
    <ligand>
        <name>Mg(2+)</name>
        <dbReference type="ChEBI" id="CHEBI:18420"/>
    </ligand>
</feature>
<feature type="binding site" evidence="1">
    <location>
        <position position="123"/>
    </location>
    <ligand>
        <name>Mg(2+)</name>
        <dbReference type="ChEBI" id="CHEBI:18420"/>
    </ligand>
</feature>
<feature type="binding site" evidence="1">
    <location>
        <position position="126"/>
    </location>
    <ligand>
        <name>Mg(2+)</name>
        <dbReference type="ChEBI" id="CHEBI:18420"/>
    </ligand>
</feature>
<keyword id="KW-0963">Cytoplasm</keyword>
<keyword id="KW-0255">Endonuclease</keyword>
<keyword id="KW-0378">Hydrolase</keyword>
<keyword id="KW-0460">Magnesium</keyword>
<keyword id="KW-0479">Metal-binding</keyword>
<keyword id="KW-0507">mRNA processing</keyword>
<keyword id="KW-0540">Nuclease</keyword>
<keyword id="KW-0694">RNA-binding</keyword>
<keyword id="KW-0698">rRNA processing</keyword>
<keyword id="KW-0699">rRNA-binding</keyword>
<keyword id="KW-0819">tRNA processing</keyword>
<name>RNC_RHIE6</name>
<organism>
    <name type="scientific">Rhizobium etli (strain CIAT 652)</name>
    <dbReference type="NCBI Taxonomy" id="491916"/>
    <lineage>
        <taxon>Bacteria</taxon>
        <taxon>Pseudomonadati</taxon>
        <taxon>Pseudomonadota</taxon>
        <taxon>Alphaproteobacteria</taxon>
        <taxon>Hyphomicrobiales</taxon>
        <taxon>Rhizobiaceae</taxon>
        <taxon>Rhizobium/Agrobacterium group</taxon>
        <taxon>Rhizobium</taxon>
    </lineage>
</organism>
<reference key="1">
    <citation type="journal article" date="2010" name="Appl. Environ. Microbiol.">
        <title>Conserved symbiotic plasmid DNA sequences in the multireplicon pangenomic structure of Rhizobium etli.</title>
        <authorList>
            <person name="Gonzalez V."/>
            <person name="Acosta J.L."/>
            <person name="Santamaria R.I."/>
            <person name="Bustos P."/>
            <person name="Fernandez J.L."/>
            <person name="Hernandez Gonzalez I.L."/>
            <person name="Diaz R."/>
            <person name="Flores M."/>
            <person name="Palacios R."/>
            <person name="Mora J."/>
            <person name="Davila G."/>
        </authorList>
    </citation>
    <scope>NUCLEOTIDE SEQUENCE [LARGE SCALE GENOMIC DNA]</scope>
    <source>
        <strain>CIAT 652</strain>
    </source>
</reference>
<protein>
    <recommendedName>
        <fullName evidence="1">Ribonuclease 3</fullName>
        <ecNumber evidence="1">3.1.26.3</ecNumber>
    </recommendedName>
    <alternativeName>
        <fullName evidence="1">Ribonuclease III</fullName>
        <shortName evidence="1">RNase III</shortName>
    </alternativeName>
</protein>